<reference key="1">
    <citation type="submission" date="2008-05" db="EMBL/GenBank/DDBJ databases">
        <title>Genome sequence of Clostridium botulinum Ba4 strain 657.</title>
        <authorList>
            <person name="Shrivastava S."/>
            <person name="Brown J.L."/>
            <person name="Bruce D."/>
            <person name="Detter C."/>
            <person name="Munk C."/>
            <person name="Smith L.A."/>
            <person name="Smith T.J."/>
            <person name="Sutton G."/>
            <person name="Brettin T.S."/>
        </authorList>
    </citation>
    <scope>NUCLEOTIDE SEQUENCE [LARGE SCALE GENOMIC DNA]</scope>
    <source>
        <strain>657 / Type Ba4</strain>
    </source>
</reference>
<organism>
    <name type="scientific">Clostridium botulinum (strain 657 / Type Ba4)</name>
    <dbReference type="NCBI Taxonomy" id="515621"/>
    <lineage>
        <taxon>Bacteria</taxon>
        <taxon>Bacillati</taxon>
        <taxon>Bacillota</taxon>
        <taxon>Clostridia</taxon>
        <taxon>Eubacteriales</taxon>
        <taxon>Clostridiaceae</taxon>
        <taxon>Clostridium</taxon>
    </lineage>
</organism>
<accession>C3L3K3</accession>
<gene>
    <name evidence="1" type="primary">minE</name>
    <name type="ordered locus">CLJ_B3254</name>
</gene>
<feature type="chain" id="PRO_1000204677" description="Cell division topological specificity factor">
    <location>
        <begin position="1"/>
        <end position="87"/>
    </location>
</feature>
<name>MINE_CLOB6</name>
<keyword id="KW-0131">Cell cycle</keyword>
<keyword id="KW-0132">Cell division</keyword>
<dbReference type="EMBL" id="CP001083">
    <property type="protein sequence ID" value="ACQ51723.1"/>
    <property type="molecule type" value="Genomic_DNA"/>
</dbReference>
<dbReference type="RefSeq" id="WP_003358099.1">
    <property type="nucleotide sequence ID" value="NC_012658.1"/>
</dbReference>
<dbReference type="SMR" id="C3L3K3"/>
<dbReference type="GeneID" id="5187008"/>
<dbReference type="KEGG" id="cbi:CLJ_B3254"/>
<dbReference type="HOGENOM" id="CLU_137929_1_0_9"/>
<dbReference type="Proteomes" id="UP000002333">
    <property type="component" value="Chromosome"/>
</dbReference>
<dbReference type="GO" id="GO:0051301">
    <property type="term" value="P:cell division"/>
    <property type="evidence" value="ECO:0007669"/>
    <property type="project" value="UniProtKB-KW"/>
</dbReference>
<dbReference type="GO" id="GO:0032955">
    <property type="term" value="P:regulation of division septum assembly"/>
    <property type="evidence" value="ECO:0007669"/>
    <property type="project" value="InterPro"/>
</dbReference>
<dbReference type="FunFam" id="3.30.1070.10:FF:000003">
    <property type="entry name" value="Cell division topological specificity factor"/>
    <property type="match status" value="1"/>
</dbReference>
<dbReference type="Gene3D" id="3.30.1070.10">
    <property type="entry name" value="Cell division topological specificity factor MinE"/>
    <property type="match status" value="1"/>
</dbReference>
<dbReference type="HAMAP" id="MF_00262">
    <property type="entry name" value="MinE"/>
    <property type="match status" value="1"/>
</dbReference>
<dbReference type="InterPro" id="IPR005527">
    <property type="entry name" value="MinE"/>
</dbReference>
<dbReference type="InterPro" id="IPR036707">
    <property type="entry name" value="MinE_sf"/>
</dbReference>
<dbReference type="NCBIfam" id="TIGR01215">
    <property type="entry name" value="minE"/>
    <property type="match status" value="1"/>
</dbReference>
<dbReference type="NCBIfam" id="NF001422">
    <property type="entry name" value="PRK00296.1"/>
    <property type="match status" value="1"/>
</dbReference>
<dbReference type="Pfam" id="PF03776">
    <property type="entry name" value="MinE"/>
    <property type="match status" value="1"/>
</dbReference>
<dbReference type="SUPFAM" id="SSF55229">
    <property type="entry name" value="Cell division protein MinE topological specificity domain"/>
    <property type="match status" value="1"/>
</dbReference>
<comment type="function">
    <text evidence="1">Prevents the cell division inhibition by proteins MinC and MinD at internal division sites while permitting inhibition at polar sites. This ensures cell division at the proper site by restricting the formation of a division septum at the midpoint of the long axis of the cell.</text>
</comment>
<comment type="similarity">
    <text evidence="1">Belongs to the MinE family.</text>
</comment>
<evidence type="ECO:0000255" key="1">
    <source>
        <dbReference type="HAMAP-Rule" id="MF_00262"/>
    </source>
</evidence>
<protein>
    <recommendedName>
        <fullName evidence="1">Cell division topological specificity factor</fullName>
    </recommendedName>
</protein>
<sequence length="87" mass="10027">MDLFKFFSKQSSKDVAKERLKLILIQDRNSISPDVLESIREDMLKVISKYIEIDNEDVDIKMSSVEEIEGMSPALIASIPIKRIKKK</sequence>
<proteinExistence type="inferred from homology"/>